<name>ISPE_BACC4</name>
<comment type="function">
    <text evidence="1">Catalyzes the phosphorylation of the position 2 hydroxy group of 4-diphosphocytidyl-2C-methyl-D-erythritol.</text>
</comment>
<comment type="catalytic activity">
    <reaction evidence="1">
        <text>4-CDP-2-C-methyl-D-erythritol + ATP = 4-CDP-2-C-methyl-D-erythritol 2-phosphate + ADP + H(+)</text>
        <dbReference type="Rhea" id="RHEA:18437"/>
        <dbReference type="ChEBI" id="CHEBI:15378"/>
        <dbReference type="ChEBI" id="CHEBI:30616"/>
        <dbReference type="ChEBI" id="CHEBI:57823"/>
        <dbReference type="ChEBI" id="CHEBI:57919"/>
        <dbReference type="ChEBI" id="CHEBI:456216"/>
        <dbReference type="EC" id="2.7.1.148"/>
    </reaction>
</comment>
<comment type="pathway">
    <text evidence="1">Isoprenoid biosynthesis; isopentenyl diphosphate biosynthesis via DXP pathway; isopentenyl diphosphate from 1-deoxy-D-xylulose 5-phosphate: step 3/6.</text>
</comment>
<comment type="similarity">
    <text evidence="1">Belongs to the GHMP kinase family. IspE subfamily.</text>
</comment>
<keyword id="KW-0067">ATP-binding</keyword>
<keyword id="KW-0414">Isoprene biosynthesis</keyword>
<keyword id="KW-0418">Kinase</keyword>
<keyword id="KW-0547">Nucleotide-binding</keyword>
<keyword id="KW-0808">Transferase</keyword>
<feature type="chain" id="PRO_1000116923" description="4-diphosphocytidyl-2-C-methyl-D-erythritol kinase">
    <location>
        <begin position="1"/>
        <end position="289"/>
    </location>
</feature>
<feature type="active site" evidence="1">
    <location>
        <position position="10"/>
    </location>
</feature>
<feature type="active site" evidence="1">
    <location>
        <position position="136"/>
    </location>
</feature>
<feature type="binding site" evidence="1">
    <location>
        <begin position="94"/>
        <end position="104"/>
    </location>
    <ligand>
        <name>ATP</name>
        <dbReference type="ChEBI" id="CHEBI:30616"/>
    </ligand>
</feature>
<gene>
    <name evidence="1" type="primary">ispE</name>
    <name type="ordered locus">BCB4264_A0050</name>
</gene>
<organism>
    <name type="scientific">Bacillus cereus (strain B4264)</name>
    <dbReference type="NCBI Taxonomy" id="405532"/>
    <lineage>
        <taxon>Bacteria</taxon>
        <taxon>Bacillati</taxon>
        <taxon>Bacillota</taxon>
        <taxon>Bacilli</taxon>
        <taxon>Bacillales</taxon>
        <taxon>Bacillaceae</taxon>
        <taxon>Bacillus</taxon>
        <taxon>Bacillus cereus group</taxon>
    </lineage>
</organism>
<proteinExistence type="inferred from homology"/>
<evidence type="ECO:0000255" key="1">
    <source>
        <dbReference type="HAMAP-Rule" id="MF_00061"/>
    </source>
</evidence>
<accession>B7HIL3</accession>
<dbReference type="EC" id="2.7.1.148" evidence="1"/>
<dbReference type="EMBL" id="CP001176">
    <property type="protein sequence ID" value="ACK60409.1"/>
    <property type="molecule type" value="Genomic_DNA"/>
</dbReference>
<dbReference type="RefSeq" id="WP_000772104.1">
    <property type="nucleotide sequence ID" value="NZ_VEHB01000020.1"/>
</dbReference>
<dbReference type="SMR" id="B7HIL3"/>
<dbReference type="GeneID" id="72446846"/>
<dbReference type="KEGG" id="bcb:BCB4264_A0050"/>
<dbReference type="HOGENOM" id="CLU_053057_1_1_9"/>
<dbReference type="UniPathway" id="UPA00056">
    <property type="reaction ID" value="UER00094"/>
</dbReference>
<dbReference type="Proteomes" id="UP000007096">
    <property type="component" value="Chromosome"/>
</dbReference>
<dbReference type="GO" id="GO:0050515">
    <property type="term" value="F:4-(cytidine 5'-diphospho)-2-C-methyl-D-erythritol kinase activity"/>
    <property type="evidence" value="ECO:0007669"/>
    <property type="project" value="UniProtKB-UniRule"/>
</dbReference>
<dbReference type="GO" id="GO:0005524">
    <property type="term" value="F:ATP binding"/>
    <property type="evidence" value="ECO:0007669"/>
    <property type="project" value="UniProtKB-UniRule"/>
</dbReference>
<dbReference type="GO" id="GO:0019288">
    <property type="term" value="P:isopentenyl diphosphate biosynthetic process, methylerythritol 4-phosphate pathway"/>
    <property type="evidence" value="ECO:0007669"/>
    <property type="project" value="UniProtKB-UniRule"/>
</dbReference>
<dbReference type="GO" id="GO:0016114">
    <property type="term" value="P:terpenoid biosynthetic process"/>
    <property type="evidence" value="ECO:0007669"/>
    <property type="project" value="InterPro"/>
</dbReference>
<dbReference type="FunFam" id="3.30.230.10:FF:000029">
    <property type="entry name" value="4-diphosphocytidyl-2-C-methyl-D-erythritol kinase"/>
    <property type="match status" value="1"/>
</dbReference>
<dbReference type="FunFam" id="3.30.70.890:FF:000006">
    <property type="entry name" value="4-diphosphocytidyl-2-C-methyl-D-erythritol kinase"/>
    <property type="match status" value="1"/>
</dbReference>
<dbReference type="Gene3D" id="3.30.230.10">
    <property type="match status" value="1"/>
</dbReference>
<dbReference type="Gene3D" id="3.30.70.890">
    <property type="entry name" value="GHMP kinase, C-terminal domain"/>
    <property type="match status" value="1"/>
</dbReference>
<dbReference type="HAMAP" id="MF_00061">
    <property type="entry name" value="IspE"/>
    <property type="match status" value="1"/>
</dbReference>
<dbReference type="InterPro" id="IPR013750">
    <property type="entry name" value="GHMP_kinase_C_dom"/>
</dbReference>
<dbReference type="InterPro" id="IPR036554">
    <property type="entry name" value="GHMP_kinase_C_sf"/>
</dbReference>
<dbReference type="InterPro" id="IPR006204">
    <property type="entry name" value="GHMP_kinase_N_dom"/>
</dbReference>
<dbReference type="InterPro" id="IPR004424">
    <property type="entry name" value="IspE"/>
</dbReference>
<dbReference type="InterPro" id="IPR020568">
    <property type="entry name" value="Ribosomal_Su5_D2-typ_SF"/>
</dbReference>
<dbReference type="InterPro" id="IPR014721">
    <property type="entry name" value="Ribsml_uS5_D2-typ_fold_subgr"/>
</dbReference>
<dbReference type="NCBIfam" id="TIGR00154">
    <property type="entry name" value="ispE"/>
    <property type="match status" value="1"/>
</dbReference>
<dbReference type="NCBIfam" id="NF011202">
    <property type="entry name" value="PRK14608.1"/>
    <property type="match status" value="1"/>
</dbReference>
<dbReference type="PANTHER" id="PTHR43527">
    <property type="entry name" value="4-DIPHOSPHOCYTIDYL-2-C-METHYL-D-ERYTHRITOL KINASE, CHLOROPLASTIC"/>
    <property type="match status" value="1"/>
</dbReference>
<dbReference type="PANTHER" id="PTHR43527:SF2">
    <property type="entry name" value="4-DIPHOSPHOCYTIDYL-2-C-METHYL-D-ERYTHRITOL KINASE, CHLOROPLASTIC"/>
    <property type="match status" value="1"/>
</dbReference>
<dbReference type="Pfam" id="PF08544">
    <property type="entry name" value="GHMP_kinases_C"/>
    <property type="match status" value="1"/>
</dbReference>
<dbReference type="Pfam" id="PF00288">
    <property type="entry name" value="GHMP_kinases_N"/>
    <property type="match status" value="1"/>
</dbReference>
<dbReference type="PIRSF" id="PIRSF010376">
    <property type="entry name" value="IspE"/>
    <property type="match status" value="1"/>
</dbReference>
<dbReference type="SUPFAM" id="SSF55060">
    <property type="entry name" value="GHMP Kinase, C-terminal domain"/>
    <property type="match status" value="1"/>
</dbReference>
<dbReference type="SUPFAM" id="SSF54211">
    <property type="entry name" value="Ribosomal protein S5 domain 2-like"/>
    <property type="match status" value="1"/>
</dbReference>
<protein>
    <recommendedName>
        <fullName evidence="1">4-diphosphocytidyl-2-C-methyl-D-erythritol kinase</fullName>
        <shortName evidence="1">CMK</shortName>
        <ecNumber evidence="1">2.7.1.148</ecNumber>
    </recommendedName>
    <alternativeName>
        <fullName evidence="1">4-(cytidine-5'-diphospho)-2-C-methyl-D-erythritol kinase</fullName>
    </alternativeName>
</protein>
<reference key="1">
    <citation type="submission" date="2008-10" db="EMBL/GenBank/DDBJ databases">
        <title>Genome sequence of Bacillus cereus B4264.</title>
        <authorList>
            <person name="Dodson R.J."/>
            <person name="Durkin A.S."/>
            <person name="Rosovitz M.J."/>
            <person name="Rasko D.A."/>
            <person name="Hoffmaster A."/>
            <person name="Ravel J."/>
            <person name="Sutton G."/>
        </authorList>
    </citation>
    <scope>NUCLEOTIDE SEQUENCE [LARGE SCALE GENOMIC DNA]</scope>
    <source>
        <strain>B4264</strain>
    </source>
</reference>
<sequence length="289" mass="31581">MKLLVKAPAKINLSLDVLGKRQDGYHEVKMIMTTIDLADRLELTELAEDRIEILSHNRYVPDDQRNLAYQAAKLLKEKFNVKKGVSITIEKTIPVAAGLAGGSSDAAATLRGLNKLWNLGLTIDELAELGAEIGSDVSFCVYGGTAIATGRGEKIEHIKTPPSCWVILAKPHIGVSTADVYGNLKLNRVTHPNVDKMVDVINSGDYKGICDTVGNVLEDVTFGMHPEVARIKSQMKRFGADAVLMSGSGPTVFGLVHHDSRMHRIYNGLKGFCEQVYAVRLLGERETLE</sequence>